<accession>B2HCX5</accession>
<organism>
    <name type="scientific">Mycobacterium marinum (strain ATCC BAA-535 / M)</name>
    <dbReference type="NCBI Taxonomy" id="216594"/>
    <lineage>
        <taxon>Bacteria</taxon>
        <taxon>Bacillati</taxon>
        <taxon>Actinomycetota</taxon>
        <taxon>Actinomycetes</taxon>
        <taxon>Mycobacteriales</taxon>
        <taxon>Mycobacteriaceae</taxon>
        <taxon>Mycobacterium</taxon>
        <taxon>Mycobacterium ulcerans group</taxon>
    </lineage>
</organism>
<keyword id="KW-1185">Reference proteome</keyword>
<keyword id="KW-0687">Ribonucleoprotein</keyword>
<keyword id="KW-0689">Ribosomal protein</keyword>
<comment type="subunit">
    <text evidence="1">Part of the 50S ribosomal subunit. Contacts protein L32.</text>
</comment>
<comment type="similarity">
    <text evidence="1">Belongs to the bacterial ribosomal protein bL17 family.</text>
</comment>
<evidence type="ECO:0000255" key="1">
    <source>
        <dbReference type="HAMAP-Rule" id="MF_01368"/>
    </source>
</evidence>
<evidence type="ECO:0000256" key="2">
    <source>
        <dbReference type="SAM" id="MobiDB-lite"/>
    </source>
</evidence>
<evidence type="ECO:0000305" key="3"/>
<dbReference type="EMBL" id="CP000854">
    <property type="protein sequence ID" value="ACC39547.1"/>
    <property type="molecule type" value="Genomic_DNA"/>
</dbReference>
<dbReference type="RefSeq" id="WP_012392978.1">
    <property type="nucleotide sequence ID" value="NC_010612.1"/>
</dbReference>
<dbReference type="SMR" id="B2HCX5"/>
<dbReference type="STRING" id="216594.MMAR_1091"/>
<dbReference type="KEGG" id="mmi:MMAR_1091"/>
<dbReference type="eggNOG" id="COG0203">
    <property type="taxonomic scope" value="Bacteria"/>
</dbReference>
<dbReference type="HOGENOM" id="CLU_074407_0_0_11"/>
<dbReference type="OrthoDB" id="9809073at2"/>
<dbReference type="Proteomes" id="UP000001190">
    <property type="component" value="Chromosome"/>
</dbReference>
<dbReference type="GO" id="GO:0022625">
    <property type="term" value="C:cytosolic large ribosomal subunit"/>
    <property type="evidence" value="ECO:0007669"/>
    <property type="project" value="TreeGrafter"/>
</dbReference>
<dbReference type="GO" id="GO:0003735">
    <property type="term" value="F:structural constituent of ribosome"/>
    <property type="evidence" value="ECO:0007669"/>
    <property type="project" value="InterPro"/>
</dbReference>
<dbReference type="GO" id="GO:0006412">
    <property type="term" value="P:translation"/>
    <property type="evidence" value="ECO:0007669"/>
    <property type="project" value="UniProtKB-UniRule"/>
</dbReference>
<dbReference type="FunFam" id="3.90.1030.10:FF:000001">
    <property type="entry name" value="50S ribosomal protein L17"/>
    <property type="match status" value="1"/>
</dbReference>
<dbReference type="Gene3D" id="3.90.1030.10">
    <property type="entry name" value="Ribosomal protein L17"/>
    <property type="match status" value="1"/>
</dbReference>
<dbReference type="HAMAP" id="MF_01368">
    <property type="entry name" value="Ribosomal_bL17"/>
    <property type="match status" value="1"/>
</dbReference>
<dbReference type="InterPro" id="IPR000456">
    <property type="entry name" value="Ribosomal_bL17"/>
</dbReference>
<dbReference type="InterPro" id="IPR047859">
    <property type="entry name" value="Ribosomal_bL17_CS"/>
</dbReference>
<dbReference type="InterPro" id="IPR036373">
    <property type="entry name" value="Ribosomal_bL17_sf"/>
</dbReference>
<dbReference type="NCBIfam" id="TIGR00059">
    <property type="entry name" value="L17"/>
    <property type="match status" value="1"/>
</dbReference>
<dbReference type="PANTHER" id="PTHR14413:SF16">
    <property type="entry name" value="LARGE RIBOSOMAL SUBUNIT PROTEIN BL17M"/>
    <property type="match status" value="1"/>
</dbReference>
<dbReference type="PANTHER" id="PTHR14413">
    <property type="entry name" value="RIBOSOMAL PROTEIN L17"/>
    <property type="match status" value="1"/>
</dbReference>
<dbReference type="Pfam" id="PF01196">
    <property type="entry name" value="Ribosomal_L17"/>
    <property type="match status" value="1"/>
</dbReference>
<dbReference type="SUPFAM" id="SSF64263">
    <property type="entry name" value="Prokaryotic ribosomal protein L17"/>
    <property type="match status" value="1"/>
</dbReference>
<dbReference type="PROSITE" id="PS01167">
    <property type="entry name" value="RIBOSOMAL_L17"/>
    <property type="match status" value="1"/>
</dbReference>
<name>RL17_MYCMM</name>
<reference key="1">
    <citation type="journal article" date="2008" name="Genome Res.">
        <title>Insights from the complete genome sequence of Mycobacterium marinum on the evolution of Mycobacterium tuberculosis.</title>
        <authorList>
            <person name="Stinear T.P."/>
            <person name="Seemann T."/>
            <person name="Harrison P.F."/>
            <person name="Jenkin G.A."/>
            <person name="Davies J.K."/>
            <person name="Johnson P.D."/>
            <person name="Abdellah Z."/>
            <person name="Arrowsmith C."/>
            <person name="Chillingworth T."/>
            <person name="Churcher C."/>
            <person name="Clarke K."/>
            <person name="Cronin A."/>
            <person name="Davis P."/>
            <person name="Goodhead I."/>
            <person name="Holroyd N."/>
            <person name="Jagels K."/>
            <person name="Lord A."/>
            <person name="Moule S."/>
            <person name="Mungall K."/>
            <person name="Norbertczak H."/>
            <person name="Quail M.A."/>
            <person name="Rabbinowitsch E."/>
            <person name="Walker D."/>
            <person name="White B."/>
            <person name="Whitehead S."/>
            <person name="Small P.L."/>
            <person name="Brosch R."/>
            <person name="Ramakrishnan L."/>
            <person name="Fischbach M.A."/>
            <person name="Parkhill J."/>
            <person name="Cole S.T."/>
        </authorList>
    </citation>
    <scope>NUCLEOTIDE SEQUENCE [LARGE SCALE GENOMIC DNA]</scope>
    <source>
        <strain>ATCC BAA-535 / M</strain>
    </source>
</reference>
<protein>
    <recommendedName>
        <fullName evidence="1">Large ribosomal subunit protein bL17</fullName>
    </recommendedName>
    <alternativeName>
        <fullName evidence="3">50S ribosomal protein L17</fullName>
    </alternativeName>
</protein>
<sequence>MPKPTKGPRLGGSSSHQKALLANLATSLFEHGRIKTTEPKARALRPYAEKLITHAKKGALHNRREVLKKIRDKDVVHTLFAEIGPFFADREGGYTRIIKVEPRKGDNAPMAVIELVREKTVTSEADRARRVKASQAASQDAPSEPQAAEEPAAEEAVAATEAVAAPADAEATDAEAGSADADADEAPQN</sequence>
<proteinExistence type="inferred from homology"/>
<gene>
    <name evidence="1" type="primary">rplQ</name>
    <name type="ordered locus">MMAR_1091</name>
</gene>
<feature type="chain" id="PRO_1000144454" description="Large ribosomal subunit protein bL17">
    <location>
        <begin position="1"/>
        <end position="189"/>
    </location>
</feature>
<feature type="region of interest" description="Disordered" evidence="2">
    <location>
        <begin position="126"/>
        <end position="189"/>
    </location>
</feature>
<feature type="compositionally biased region" description="Low complexity" evidence="2">
    <location>
        <begin position="139"/>
        <end position="180"/>
    </location>
</feature>